<accession>Q50290</accession>
<protein>
    <recommendedName>
        <fullName evidence="2">Type II methyltransferase M.MpnI</fullName>
        <shortName evidence="2">M.MpnI</shortName>
        <ecNumber evidence="1">2.1.1.72</ecNumber>
    </recommendedName>
</protein>
<name>MTM1_MYCPN</name>
<keyword id="KW-0238">DNA-binding</keyword>
<keyword id="KW-0489">Methyltransferase</keyword>
<keyword id="KW-1185">Reference proteome</keyword>
<keyword id="KW-0949">S-adenosyl-L-methionine</keyword>
<keyword id="KW-0808">Transferase</keyword>
<comment type="function">
    <text evidence="1">A methylase that recognizes the double-stranded sequence 5'-CTAT-3' and methylates A-3 on one strand; probably responsible for all of the methylation on this site in the genome.</text>
</comment>
<comment type="catalytic activity">
    <reaction evidence="1">
        <text>a 2'-deoxyadenosine in DNA + S-adenosyl-L-methionine = an N(6)-methyl-2'-deoxyadenosine in DNA + S-adenosyl-L-homocysteine + H(+)</text>
        <dbReference type="Rhea" id="RHEA:15197"/>
        <dbReference type="Rhea" id="RHEA-COMP:12418"/>
        <dbReference type="Rhea" id="RHEA-COMP:12419"/>
        <dbReference type="ChEBI" id="CHEBI:15378"/>
        <dbReference type="ChEBI" id="CHEBI:57856"/>
        <dbReference type="ChEBI" id="CHEBI:59789"/>
        <dbReference type="ChEBI" id="CHEBI:90615"/>
        <dbReference type="ChEBI" id="CHEBI:90616"/>
        <dbReference type="EC" id="2.1.1.72"/>
    </reaction>
</comment>
<comment type="induction">
    <text evidence="1">Detected after 6 and 96 hours growth, there are fewer copies at 96 hours (at protein level).</text>
</comment>
<comment type="disruption phenotype">
    <text evidence="1">Essential it cannot be disrupted.</text>
</comment>
<comment type="similarity">
    <text evidence="3">Belongs to the N(4)/N(6)-methyltransferase family.</text>
</comment>
<gene>
    <name evidence="2" type="primary">mte1</name>
    <name type="ordered locus">MPN_198</name>
    <name type="ORF">GT9_orf319V</name>
    <name type="ORF">MP633</name>
</gene>
<feature type="chain" id="PRO_0000088018" description="Type II methyltransferase M.MpnI">
    <location>
        <begin position="1"/>
        <end position="319"/>
    </location>
</feature>
<reference key="1">
    <citation type="journal article" date="1996" name="Nucleic Acids Res.">
        <title>Sequence analysis of 56 kb from the genome of the bacterium Mycoplasma pneumoniae comprising the dnaA region, the atp operon and a cluster of ribosomal protein genes.</title>
        <authorList>
            <person name="Hilbert H."/>
            <person name="Himmelreich R."/>
            <person name="Plagens H."/>
            <person name="Herrmann R."/>
        </authorList>
    </citation>
    <scope>NUCLEOTIDE SEQUENCE [GENOMIC DNA]</scope>
    <source>
        <strain>ATCC 29342 / M129 / Subtype 1</strain>
    </source>
</reference>
<reference key="2">
    <citation type="journal article" date="1996" name="Nucleic Acids Res.">
        <title>Complete sequence analysis of the genome of the bacterium Mycoplasma pneumoniae.</title>
        <authorList>
            <person name="Himmelreich R."/>
            <person name="Hilbert H."/>
            <person name="Plagens H."/>
            <person name="Pirkl E."/>
            <person name="Li B.-C."/>
            <person name="Herrmann R."/>
        </authorList>
    </citation>
    <scope>NUCLEOTIDE SEQUENCE [LARGE SCALE GENOMIC DNA]</scope>
    <source>
        <strain>ATCC 29342 / M129 / Subtype 1</strain>
    </source>
</reference>
<reference key="3">
    <citation type="journal article" date="2003" name="Nucleic Acids Res.">
        <title>A nomenclature for restriction enzymes, DNA methyltransferases, homing endonucleases and their genes.</title>
        <authorList>
            <person name="Roberts R.J."/>
            <person name="Belfort M."/>
            <person name="Bestor T."/>
            <person name="Bhagwat A.S."/>
            <person name="Bickle T.A."/>
            <person name="Bitinaite J."/>
            <person name="Blumenthal R.M."/>
            <person name="Degtyarev S.K."/>
            <person name="Dryden D.T."/>
            <person name="Dybvig K."/>
            <person name="Firman K."/>
            <person name="Gromova E.S."/>
            <person name="Gumport R.I."/>
            <person name="Halford S.E."/>
            <person name="Hattman S."/>
            <person name="Heitman J."/>
            <person name="Hornby D.P."/>
            <person name="Janulaitis A."/>
            <person name="Jeltsch A."/>
            <person name="Josephsen J."/>
            <person name="Kiss A."/>
            <person name="Klaenhammer T.R."/>
            <person name="Kobayashi I."/>
            <person name="Kong H."/>
            <person name="Krueger D.H."/>
            <person name="Lacks S."/>
            <person name="Marinus M.G."/>
            <person name="Miyahara M."/>
            <person name="Morgan R.D."/>
            <person name="Murray N.E."/>
            <person name="Nagaraja V."/>
            <person name="Piekarowicz A."/>
            <person name="Pingoud A."/>
            <person name="Raleigh E."/>
            <person name="Rao D.N."/>
            <person name="Reich N."/>
            <person name="Repin V.E."/>
            <person name="Selker E.U."/>
            <person name="Shaw P.C."/>
            <person name="Stein D.C."/>
            <person name="Stoddard B.L."/>
            <person name="Szybalski W."/>
            <person name="Trautner T.A."/>
            <person name="Van Etten J.L."/>
            <person name="Vitor J.M."/>
            <person name="Wilson G.G."/>
            <person name="Xu S.Y."/>
        </authorList>
    </citation>
    <scope>NOMENCLATURE</scope>
</reference>
<reference key="4">
    <citation type="journal article" date="2013" name="PLoS Genet.">
        <title>Comprehensive methylome characterization of Mycoplasma genitalium and Mycoplasma pneumoniae at single-base resolution.</title>
        <authorList>
            <person name="Lluch-Senar M."/>
            <person name="Luong K."/>
            <person name="Llorens-Rico V."/>
            <person name="Delgado J."/>
            <person name="Fang G."/>
            <person name="Spittle K."/>
            <person name="Clark T.A."/>
            <person name="Schadt E."/>
            <person name="Turner S.W."/>
            <person name="Korlach J."/>
            <person name="Serrano L."/>
        </authorList>
    </citation>
    <scope>FUNCTION</scope>
    <scope>CATALYTIC ACTIVITY</scope>
    <scope>INDUCTION</scope>
    <scope>DISRUPTION PHENOTYPE</scope>
    <scope>DNA-BINDING</scope>
    <source>
        <strain>ATCC 29342 / M129 / Subtype 1</strain>
    </source>
</reference>
<sequence length="319" mass="36870">MHYFNRAKKAKNNEFYTLFEDIAAEVACYPNAFKGKVVLCNCNDGYQSNFWQFFQSQFHALGLKKLVAIAFNPLGNSYQLNFDGKEIKELPLAGNGSFDSAEAIVLLKQSDIVVTNPPFSLFQDFVCLLAEHGKQFLVLGHNGAVGYNQIFKLFKEEQLWYGHTVNSSMLFQVQSNFKLYDPKSVNFVKKDGQLFQKVPGISWFTNLKKNQQPAWLKTKSRYQGNEHKYPKFDWYDAIFVSKVKEIPLDWFGYMGVPLTFLNCFNPKQFELIDCLANPYATLDTLKTNAYVRSHHGDVRNVKGKRRYVRVVIKQRQNVI</sequence>
<organism>
    <name type="scientific">Mycoplasma pneumoniae (strain ATCC 29342 / M129 / Subtype 1)</name>
    <name type="common">Mycoplasmoides pneumoniae</name>
    <dbReference type="NCBI Taxonomy" id="272634"/>
    <lineage>
        <taxon>Bacteria</taxon>
        <taxon>Bacillati</taxon>
        <taxon>Mycoplasmatota</taxon>
        <taxon>Mycoplasmoidales</taxon>
        <taxon>Mycoplasmoidaceae</taxon>
        <taxon>Mycoplasmoides</taxon>
    </lineage>
</organism>
<dbReference type="EC" id="2.1.1.72" evidence="1"/>
<dbReference type="EMBL" id="U34795">
    <property type="protein sequence ID" value="AAC43683.1"/>
    <property type="molecule type" value="Genomic_DNA"/>
</dbReference>
<dbReference type="EMBL" id="U00089">
    <property type="protein sequence ID" value="AAB96281.1"/>
    <property type="molecule type" value="Genomic_DNA"/>
</dbReference>
<dbReference type="PIR" id="S62810">
    <property type="entry name" value="S62810"/>
</dbReference>
<dbReference type="RefSeq" id="NP_109886.1">
    <property type="nucleotide sequence ID" value="NC_000912.1"/>
</dbReference>
<dbReference type="RefSeq" id="WP_010874555.1">
    <property type="nucleotide sequence ID" value="NZ_OU342337.1"/>
</dbReference>
<dbReference type="STRING" id="272634.MPN_198"/>
<dbReference type="REBASE" id="182809">
    <property type="entry name" value="M.DspNSZ14ORF526P"/>
</dbReference>
<dbReference type="REBASE" id="6710">
    <property type="entry name" value="M.MpnI"/>
</dbReference>
<dbReference type="EnsemblBacteria" id="AAB96281">
    <property type="protein sequence ID" value="AAB96281"/>
    <property type="gene ID" value="MPN_198"/>
</dbReference>
<dbReference type="KEGG" id="mpn:MPN_198"/>
<dbReference type="PATRIC" id="fig|272634.6.peg.216"/>
<dbReference type="HOGENOM" id="CLU_057063_2_0_14"/>
<dbReference type="OrthoDB" id="9774673at2"/>
<dbReference type="BioCyc" id="MPNE272634:G1GJ3-316-MONOMER"/>
<dbReference type="Proteomes" id="UP000000808">
    <property type="component" value="Chromosome"/>
</dbReference>
<dbReference type="GO" id="GO:0003677">
    <property type="term" value="F:DNA binding"/>
    <property type="evidence" value="ECO:0007669"/>
    <property type="project" value="UniProtKB-KW"/>
</dbReference>
<dbReference type="GO" id="GO:0009007">
    <property type="term" value="F:site-specific DNA-methyltransferase (adenine-specific) activity"/>
    <property type="evidence" value="ECO:0007669"/>
    <property type="project" value="UniProtKB-EC"/>
</dbReference>
<dbReference type="GO" id="GO:0032259">
    <property type="term" value="P:methylation"/>
    <property type="evidence" value="ECO:0007669"/>
    <property type="project" value="UniProtKB-KW"/>
</dbReference>
<dbReference type="InterPro" id="IPR002052">
    <property type="entry name" value="DNA_methylase_N6_adenine_CS"/>
</dbReference>
<dbReference type="InterPro" id="IPR025247">
    <property type="entry name" value="EcoRI-like_methylase"/>
</dbReference>
<dbReference type="Pfam" id="PF13651">
    <property type="entry name" value="EcoRI_methylase"/>
    <property type="match status" value="2"/>
</dbReference>
<dbReference type="PROSITE" id="PS00092">
    <property type="entry name" value="N6_MTASE"/>
    <property type="match status" value="1"/>
</dbReference>
<evidence type="ECO:0000269" key="1">
    <source>
    </source>
</evidence>
<evidence type="ECO:0000303" key="2">
    <source>
    </source>
</evidence>
<evidence type="ECO:0000305" key="3"/>
<proteinExistence type="evidence at protein level"/>